<proteinExistence type="inferred from homology"/>
<evidence type="ECO:0000255" key="1">
    <source>
        <dbReference type="HAMAP-Rule" id="MF_00503"/>
    </source>
</evidence>
<evidence type="ECO:0000305" key="2"/>
<keyword id="KW-0687">Ribonucleoprotein</keyword>
<keyword id="KW-0689">Ribosomal protein</keyword>
<keyword id="KW-0694">RNA-binding</keyword>
<keyword id="KW-0699">rRNA-binding</keyword>
<reference key="1">
    <citation type="journal article" date="2007" name="Proc. Natl. Acad. Sci. U.S.A.">
        <title>Deep-sea vent epsilon-proteobacterial genomes provide insights into emergence of pathogens.</title>
        <authorList>
            <person name="Nakagawa S."/>
            <person name="Takaki Y."/>
            <person name="Shimamura S."/>
            <person name="Reysenbach A.-L."/>
            <person name="Takai K."/>
            <person name="Horikoshi K."/>
        </authorList>
    </citation>
    <scope>NUCLEOTIDE SEQUENCE [LARGE SCALE GENOMIC DNA]</scope>
    <source>
        <strain>NBC37-1</strain>
    </source>
</reference>
<gene>
    <name evidence="1" type="primary">rplI</name>
    <name type="ordered locus">SUN_1682</name>
</gene>
<protein>
    <recommendedName>
        <fullName evidence="1">Large ribosomal subunit protein bL9</fullName>
    </recommendedName>
    <alternativeName>
        <fullName evidence="2">50S ribosomal protein L9</fullName>
    </alternativeName>
</protein>
<sequence>MKVLLIKDVKSLGKAGEIKEVKDGYGQNFLINKGLAKLATPDVVENWKAEQARQEKELKEEIERFEAEKKMLEAHTIRIEKQSAPVGIKGSVGNADISAAIKEQLDIDLDKKHINLKKALKSTGIHEVDAKLGHGIHATLKVEVVGV</sequence>
<organism>
    <name type="scientific">Sulfurovum sp. (strain NBC37-1)</name>
    <dbReference type="NCBI Taxonomy" id="387093"/>
    <lineage>
        <taxon>Bacteria</taxon>
        <taxon>Pseudomonadati</taxon>
        <taxon>Campylobacterota</taxon>
        <taxon>Epsilonproteobacteria</taxon>
        <taxon>Campylobacterales</taxon>
        <taxon>Sulfurovaceae</taxon>
        <taxon>Sulfurovum</taxon>
    </lineage>
</organism>
<accession>A6QAX3</accession>
<dbReference type="EMBL" id="AP009179">
    <property type="protein sequence ID" value="BAF72632.1"/>
    <property type="molecule type" value="Genomic_DNA"/>
</dbReference>
<dbReference type="RefSeq" id="WP_012083442.1">
    <property type="nucleotide sequence ID" value="NC_009663.1"/>
</dbReference>
<dbReference type="SMR" id="A6QAX3"/>
<dbReference type="STRING" id="387093.SUN_1682"/>
<dbReference type="KEGG" id="sun:SUN_1682"/>
<dbReference type="eggNOG" id="COG0359">
    <property type="taxonomic scope" value="Bacteria"/>
</dbReference>
<dbReference type="HOGENOM" id="CLU_078938_3_0_7"/>
<dbReference type="OrthoDB" id="9788336at2"/>
<dbReference type="Proteomes" id="UP000006378">
    <property type="component" value="Chromosome"/>
</dbReference>
<dbReference type="GO" id="GO:1990904">
    <property type="term" value="C:ribonucleoprotein complex"/>
    <property type="evidence" value="ECO:0007669"/>
    <property type="project" value="UniProtKB-KW"/>
</dbReference>
<dbReference type="GO" id="GO:0005840">
    <property type="term" value="C:ribosome"/>
    <property type="evidence" value="ECO:0007669"/>
    <property type="project" value="UniProtKB-KW"/>
</dbReference>
<dbReference type="GO" id="GO:0019843">
    <property type="term" value="F:rRNA binding"/>
    <property type="evidence" value="ECO:0007669"/>
    <property type="project" value="UniProtKB-UniRule"/>
</dbReference>
<dbReference type="GO" id="GO:0003735">
    <property type="term" value="F:structural constituent of ribosome"/>
    <property type="evidence" value="ECO:0007669"/>
    <property type="project" value="InterPro"/>
</dbReference>
<dbReference type="GO" id="GO:0006412">
    <property type="term" value="P:translation"/>
    <property type="evidence" value="ECO:0007669"/>
    <property type="project" value="UniProtKB-UniRule"/>
</dbReference>
<dbReference type="FunFam" id="3.40.5.10:FF:000002">
    <property type="entry name" value="50S ribosomal protein L9"/>
    <property type="match status" value="1"/>
</dbReference>
<dbReference type="Gene3D" id="3.10.430.100">
    <property type="entry name" value="Ribosomal protein L9, C-terminal domain"/>
    <property type="match status" value="1"/>
</dbReference>
<dbReference type="Gene3D" id="3.40.5.10">
    <property type="entry name" value="Ribosomal protein L9, N-terminal domain"/>
    <property type="match status" value="1"/>
</dbReference>
<dbReference type="HAMAP" id="MF_00503">
    <property type="entry name" value="Ribosomal_bL9"/>
    <property type="match status" value="1"/>
</dbReference>
<dbReference type="InterPro" id="IPR000244">
    <property type="entry name" value="Ribosomal_bL9"/>
</dbReference>
<dbReference type="InterPro" id="IPR009027">
    <property type="entry name" value="Ribosomal_bL9/RNase_H1_N"/>
</dbReference>
<dbReference type="InterPro" id="IPR020594">
    <property type="entry name" value="Ribosomal_bL9_bac/chp"/>
</dbReference>
<dbReference type="InterPro" id="IPR020069">
    <property type="entry name" value="Ribosomal_bL9_C"/>
</dbReference>
<dbReference type="InterPro" id="IPR036791">
    <property type="entry name" value="Ribosomal_bL9_C_sf"/>
</dbReference>
<dbReference type="InterPro" id="IPR020070">
    <property type="entry name" value="Ribosomal_bL9_N"/>
</dbReference>
<dbReference type="InterPro" id="IPR036935">
    <property type="entry name" value="Ribosomal_bL9_N_sf"/>
</dbReference>
<dbReference type="NCBIfam" id="TIGR00158">
    <property type="entry name" value="L9"/>
    <property type="match status" value="1"/>
</dbReference>
<dbReference type="PANTHER" id="PTHR21368">
    <property type="entry name" value="50S RIBOSOMAL PROTEIN L9"/>
    <property type="match status" value="1"/>
</dbReference>
<dbReference type="Pfam" id="PF03948">
    <property type="entry name" value="Ribosomal_L9_C"/>
    <property type="match status" value="1"/>
</dbReference>
<dbReference type="Pfam" id="PF01281">
    <property type="entry name" value="Ribosomal_L9_N"/>
    <property type="match status" value="1"/>
</dbReference>
<dbReference type="SUPFAM" id="SSF55658">
    <property type="entry name" value="L9 N-domain-like"/>
    <property type="match status" value="1"/>
</dbReference>
<dbReference type="SUPFAM" id="SSF55653">
    <property type="entry name" value="Ribosomal protein L9 C-domain"/>
    <property type="match status" value="1"/>
</dbReference>
<dbReference type="PROSITE" id="PS00651">
    <property type="entry name" value="RIBOSOMAL_L9"/>
    <property type="match status" value="1"/>
</dbReference>
<comment type="function">
    <text evidence="1">Binds to the 23S rRNA.</text>
</comment>
<comment type="similarity">
    <text evidence="1">Belongs to the bacterial ribosomal protein bL9 family.</text>
</comment>
<name>RL9_SULNB</name>
<feature type="chain" id="PRO_1000014874" description="Large ribosomal subunit protein bL9">
    <location>
        <begin position="1"/>
        <end position="147"/>
    </location>
</feature>